<proteinExistence type="inferred from homology"/>
<keyword id="KW-0474">Menaquinone biosynthesis</keyword>
<keyword id="KW-0489">Methyltransferase</keyword>
<keyword id="KW-0949">S-adenosyl-L-methionine</keyword>
<keyword id="KW-0808">Transferase</keyword>
<organism>
    <name type="scientific">Mycolicibacterium vanbaalenii (strain DSM 7251 / JCM 13017 / BCRC 16820 / KCTC 9966 / NRRL B-24157 / PYR-1)</name>
    <name type="common">Mycobacterium vanbaalenii</name>
    <dbReference type="NCBI Taxonomy" id="350058"/>
    <lineage>
        <taxon>Bacteria</taxon>
        <taxon>Bacillati</taxon>
        <taxon>Actinomycetota</taxon>
        <taxon>Actinomycetes</taxon>
        <taxon>Mycobacteriales</taxon>
        <taxon>Mycobacteriaceae</taxon>
        <taxon>Mycolicibacterium</taxon>
    </lineage>
</organism>
<feature type="chain" id="PRO_1000056264" description="Demethylmenaquinone methyltransferase">
    <location>
        <begin position="1"/>
        <end position="228"/>
    </location>
</feature>
<feature type="binding site" evidence="1">
    <location>
        <position position="62"/>
    </location>
    <ligand>
        <name>S-adenosyl-L-methionine</name>
        <dbReference type="ChEBI" id="CHEBI:59789"/>
    </ligand>
</feature>
<feature type="binding site" evidence="1">
    <location>
        <position position="80"/>
    </location>
    <ligand>
        <name>S-adenosyl-L-methionine</name>
        <dbReference type="ChEBI" id="CHEBI:59789"/>
    </ligand>
</feature>
<feature type="binding site" evidence="1">
    <location>
        <begin position="100"/>
        <end position="101"/>
    </location>
    <ligand>
        <name>S-adenosyl-L-methionine</name>
        <dbReference type="ChEBI" id="CHEBI:59789"/>
    </ligand>
</feature>
<feature type="binding site" evidence="1">
    <location>
        <position position="117"/>
    </location>
    <ligand>
        <name>S-adenosyl-L-methionine</name>
        <dbReference type="ChEBI" id="CHEBI:59789"/>
    </ligand>
</feature>
<gene>
    <name evidence="1" type="primary">menG</name>
    <name type="ordered locus">Mvan_0983</name>
</gene>
<dbReference type="EC" id="2.1.1.163" evidence="1"/>
<dbReference type="EMBL" id="CP000511">
    <property type="protein sequence ID" value="ABM11821.1"/>
    <property type="molecule type" value="Genomic_DNA"/>
</dbReference>
<dbReference type="RefSeq" id="WP_011778256.1">
    <property type="nucleotide sequence ID" value="NZ_JACKSD010000129.1"/>
</dbReference>
<dbReference type="SMR" id="A1T3S1"/>
<dbReference type="STRING" id="350058.Mvan_0983"/>
<dbReference type="KEGG" id="mva:Mvan_0983"/>
<dbReference type="eggNOG" id="COG2226">
    <property type="taxonomic scope" value="Bacteria"/>
</dbReference>
<dbReference type="HOGENOM" id="CLU_037990_0_0_11"/>
<dbReference type="UniPathway" id="UPA00079">
    <property type="reaction ID" value="UER00169"/>
</dbReference>
<dbReference type="Proteomes" id="UP000009159">
    <property type="component" value="Chromosome"/>
</dbReference>
<dbReference type="GO" id="GO:0043770">
    <property type="term" value="F:demethylmenaquinone methyltransferase activity"/>
    <property type="evidence" value="ECO:0007669"/>
    <property type="project" value="UniProtKB-UniRule"/>
</dbReference>
<dbReference type="GO" id="GO:0009234">
    <property type="term" value="P:menaquinone biosynthetic process"/>
    <property type="evidence" value="ECO:0007669"/>
    <property type="project" value="UniProtKB-UniRule"/>
</dbReference>
<dbReference type="GO" id="GO:0032259">
    <property type="term" value="P:methylation"/>
    <property type="evidence" value="ECO:0007669"/>
    <property type="project" value="UniProtKB-KW"/>
</dbReference>
<dbReference type="CDD" id="cd02440">
    <property type="entry name" value="AdoMet_MTases"/>
    <property type="match status" value="1"/>
</dbReference>
<dbReference type="Gene3D" id="3.40.50.150">
    <property type="entry name" value="Vaccinia Virus protein VP39"/>
    <property type="match status" value="1"/>
</dbReference>
<dbReference type="HAMAP" id="MF_01813">
    <property type="entry name" value="MenG_UbiE_methyltr"/>
    <property type="match status" value="1"/>
</dbReference>
<dbReference type="InterPro" id="IPR029063">
    <property type="entry name" value="SAM-dependent_MTases_sf"/>
</dbReference>
<dbReference type="InterPro" id="IPR004033">
    <property type="entry name" value="UbiE/COQ5_MeTrFase"/>
</dbReference>
<dbReference type="InterPro" id="IPR023576">
    <property type="entry name" value="UbiE/COQ5_MeTrFase_CS"/>
</dbReference>
<dbReference type="NCBIfam" id="TIGR01934">
    <property type="entry name" value="MenG_MenH_UbiE"/>
    <property type="match status" value="1"/>
</dbReference>
<dbReference type="NCBIfam" id="NF001241">
    <property type="entry name" value="PRK00216.1-2"/>
    <property type="match status" value="1"/>
</dbReference>
<dbReference type="PANTHER" id="PTHR43591:SF24">
    <property type="entry name" value="2-METHOXY-6-POLYPRENYL-1,4-BENZOQUINOL METHYLASE, MITOCHONDRIAL"/>
    <property type="match status" value="1"/>
</dbReference>
<dbReference type="PANTHER" id="PTHR43591">
    <property type="entry name" value="METHYLTRANSFERASE"/>
    <property type="match status" value="1"/>
</dbReference>
<dbReference type="Pfam" id="PF01209">
    <property type="entry name" value="Ubie_methyltran"/>
    <property type="match status" value="1"/>
</dbReference>
<dbReference type="SUPFAM" id="SSF53335">
    <property type="entry name" value="S-adenosyl-L-methionine-dependent methyltransferases"/>
    <property type="match status" value="1"/>
</dbReference>
<dbReference type="PROSITE" id="PS51608">
    <property type="entry name" value="SAM_MT_UBIE"/>
    <property type="match status" value="1"/>
</dbReference>
<dbReference type="PROSITE" id="PS01183">
    <property type="entry name" value="UBIE_1"/>
    <property type="match status" value="1"/>
</dbReference>
<dbReference type="PROSITE" id="PS01184">
    <property type="entry name" value="UBIE_2"/>
    <property type="match status" value="1"/>
</dbReference>
<sequence>MNRASLEKDPHEVASMFDGVARRYDLTNTVLSLGQDRFWRRATREALQLSPSDKVLDLAAGTAVSTVELAGSGAWCVAADFSVGMLAAGAARDVPKVAGDATRLPFADGVFDAVTISFGLRNVVDHSAGLREMARVTRPGGRLVVCEFSTPTNKLFATVYKEYLMRALPAMASAVSSNPDAYVYLAESIRAWPDQAELAARIEAAGWSDVRWRNLTGGIVALHAATKA</sequence>
<protein>
    <recommendedName>
        <fullName evidence="1">Demethylmenaquinone methyltransferase</fullName>
        <ecNumber evidence="1">2.1.1.163</ecNumber>
    </recommendedName>
</protein>
<evidence type="ECO:0000255" key="1">
    <source>
        <dbReference type="HAMAP-Rule" id="MF_01813"/>
    </source>
</evidence>
<reference key="1">
    <citation type="submission" date="2006-12" db="EMBL/GenBank/DDBJ databases">
        <title>Complete sequence of Mycobacterium vanbaalenii PYR-1.</title>
        <authorList>
            <consortium name="US DOE Joint Genome Institute"/>
            <person name="Copeland A."/>
            <person name="Lucas S."/>
            <person name="Lapidus A."/>
            <person name="Barry K."/>
            <person name="Detter J.C."/>
            <person name="Glavina del Rio T."/>
            <person name="Hammon N."/>
            <person name="Israni S."/>
            <person name="Dalin E."/>
            <person name="Tice H."/>
            <person name="Pitluck S."/>
            <person name="Singan V."/>
            <person name="Schmutz J."/>
            <person name="Larimer F."/>
            <person name="Land M."/>
            <person name="Hauser L."/>
            <person name="Kyrpides N."/>
            <person name="Anderson I.J."/>
            <person name="Miller C."/>
            <person name="Richardson P."/>
        </authorList>
    </citation>
    <scope>NUCLEOTIDE SEQUENCE [LARGE SCALE GENOMIC DNA]</scope>
    <source>
        <strain>DSM 7251 / JCM 13017 / BCRC 16820 / KCTC 9966 / NRRL B-24157 / PYR-1</strain>
    </source>
</reference>
<comment type="function">
    <text evidence="1">Methyltransferase required for the conversion of demethylmenaquinol (DMKH2) to menaquinol (MKH2).</text>
</comment>
<comment type="catalytic activity">
    <reaction evidence="1">
        <text>a 2-demethylmenaquinol + S-adenosyl-L-methionine = a menaquinol + S-adenosyl-L-homocysteine + H(+)</text>
        <dbReference type="Rhea" id="RHEA:42640"/>
        <dbReference type="Rhea" id="RHEA-COMP:9539"/>
        <dbReference type="Rhea" id="RHEA-COMP:9563"/>
        <dbReference type="ChEBI" id="CHEBI:15378"/>
        <dbReference type="ChEBI" id="CHEBI:18151"/>
        <dbReference type="ChEBI" id="CHEBI:55437"/>
        <dbReference type="ChEBI" id="CHEBI:57856"/>
        <dbReference type="ChEBI" id="CHEBI:59789"/>
        <dbReference type="EC" id="2.1.1.163"/>
    </reaction>
</comment>
<comment type="pathway">
    <text evidence="1">Quinol/quinone metabolism; menaquinone biosynthesis; menaquinol from 1,4-dihydroxy-2-naphthoate: step 2/2.</text>
</comment>
<comment type="similarity">
    <text evidence="1">Belongs to the class I-like SAM-binding methyltransferase superfamily. MenG/UbiE family.</text>
</comment>
<name>MENG_MYCVP</name>
<accession>A1T3S1</accession>